<accession>Q5KV94</accession>
<comment type="function">
    <text evidence="1">Part of the Sec protein translocase complex. Interacts with the SecYEG preprotein conducting channel. Has a central role in coupling the hydrolysis of ATP to the transfer of proteins into and across the cell membrane, serving as an ATP-driven molecular motor driving the stepwise translocation of polypeptide chains across the membrane.</text>
</comment>
<comment type="catalytic activity">
    <reaction evidence="1">
        <text>ATP + H2O + cellular proteinSide 1 = ADP + phosphate + cellular proteinSide 2.</text>
        <dbReference type="EC" id="7.4.2.8"/>
    </reaction>
</comment>
<comment type="cofactor">
    <cofactor evidence="1">
        <name>Zn(2+)</name>
        <dbReference type="ChEBI" id="CHEBI:29105"/>
    </cofactor>
    <text evidence="1">May bind 1 zinc ion per subunit.</text>
</comment>
<comment type="subunit">
    <text evidence="1">Monomer and homodimer. Part of the essential Sec protein translocation apparatus which comprises SecA, SecYEG and auxiliary proteins SecDF. Other proteins may also be involved.</text>
</comment>
<comment type="subcellular location">
    <subcellularLocation>
        <location evidence="1">Cell membrane</location>
        <topology evidence="1">Peripheral membrane protein</topology>
        <orientation evidence="1">Cytoplasmic side</orientation>
    </subcellularLocation>
    <subcellularLocation>
        <location evidence="1">Cytoplasm</location>
    </subcellularLocation>
    <text evidence="1">Distribution is 50-50.</text>
</comment>
<comment type="similarity">
    <text evidence="1">Belongs to the SecA family.</text>
</comment>
<sequence>MLGVLKKVFDPNKRQLARLEKIADQVDALGPEMARLSDEQLRQKTEEFKARYQQGESLDDLLVEAFAVVREGAKRVLGLYPYKVQIMGGVVLHEGDIAEMKTGEGKTLTATMPVYLNALTGRGVHVVTVNEYLATRDATEMGKLYEFLGMTVGLNLSGMSREEKQAAYNADITYGTNNEFGFDYLRDNMVLYKEHIVQRPLYYAIIDEVDSILIDEARTPLIISGTAQKSTKLYVQANAFVRTLRKDVDYTYDEKTKSVQLTEEGINKAERAFGIDNLFDLKHVTLNHHIQLALRAHVTMQRDVDYVVQDGKVIIVDPFTGRLMHGRRYSDGLHQAIEAKEGLEIQNESMTLATITFQNYFRMYEKLAGMTGTAKTEEEEFRNIYNMRVVVIPTNRPVIREDRPDLIYRTMEGKFRAVVEDIAARHAKGQPVLVGTVAIETSEMLSEMLKKRGIPHNVLNAKNHAKEAEIIAQAGQKGAVTIATNMAGRGTDIKLGEGVKELGGLAVIGTERHESRRIDNQLRGRSGRQGDPGVSQFYLSLEDELMRRFGSESLMAMMDRLGMDDSQPIQSKMVTRAVESAQKRVEGNNFDARKQLLQYDDVLREQREIIYRQRYEVLDSDNLRGIIEKMIHSVIERVVNAHTPKEEVPEEWNLKGLVEYLNAHLLPEGDVTEADLRGKEPEEMIELIWAKVKARYDEKEAQIPPEQMREFERVVVLRAVDMKWMHHIDAMEQLRQGIHLRAYGQVDPLREYQMEGYAMFEEMIAAIEEEVATYIMKAEIHHNLERQEVAKGEAVHPKEDGEEPKRKPVRKAVRVGRNDPCPCGSGKKYKHCCGRTV</sequence>
<name>SECA1_GEOKA</name>
<reference key="1">
    <citation type="journal article" date="2004" name="Nucleic Acids Res.">
        <title>Thermoadaptation trait revealed by the genome sequence of thermophilic Geobacillus kaustophilus.</title>
        <authorList>
            <person name="Takami H."/>
            <person name="Takaki Y."/>
            <person name="Chee G.-J."/>
            <person name="Nishi S."/>
            <person name="Shimamura S."/>
            <person name="Suzuki H."/>
            <person name="Matsui S."/>
            <person name="Uchiyama I."/>
        </authorList>
    </citation>
    <scope>NUCLEOTIDE SEQUENCE [LARGE SCALE GENOMIC DNA]</scope>
    <source>
        <strain>HTA426</strain>
    </source>
</reference>
<protein>
    <recommendedName>
        <fullName evidence="1">Protein translocase subunit SecA 1</fullName>
        <ecNumber evidence="1">7.4.2.8</ecNumber>
    </recommendedName>
</protein>
<dbReference type="EC" id="7.4.2.8" evidence="1"/>
<dbReference type="EMBL" id="BA000043">
    <property type="protein sequence ID" value="BAD77392.1"/>
    <property type="molecule type" value="Genomic_DNA"/>
</dbReference>
<dbReference type="SMR" id="Q5KV94"/>
<dbReference type="STRING" id="235909.GK3107"/>
<dbReference type="KEGG" id="gka:GK3107"/>
<dbReference type="PATRIC" id="fig|235909.7.peg.3316"/>
<dbReference type="eggNOG" id="COG0653">
    <property type="taxonomic scope" value="Bacteria"/>
</dbReference>
<dbReference type="HOGENOM" id="CLU_005314_3_0_9"/>
<dbReference type="Proteomes" id="UP000001172">
    <property type="component" value="Chromosome"/>
</dbReference>
<dbReference type="GO" id="GO:0031522">
    <property type="term" value="C:cell envelope Sec protein transport complex"/>
    <property type="evidence" value="ECO:0007669"/>
    <property type="project" value="TreeGrafter"/>
</dbReference>
<dbReference type="GO" id="GO:0005829">
    <property type="term" value="C:cytosol"/>
    <property type="evidence" value="ECO:0007669"/>
    <property type="project" value="TreeGrafter"/>
</dbReference>
<dbReference type="GO" id="GO:0005886">
    <property type="term" value="C:plasma membrane"/>
    <property type="evidence" value="ECO:0007669"/>
    <property type="project" value="UniProtKB-SubCell"/>
</dbReference>
<dbReference type="GO" id="GO:0005524">
    <property type="term" value="F:ATP binding"/>
    <property type="evidence" value="ECO:0007669"/>
    <property type="project" value="UniProtKB-UniRule"/>
</dbReference>
<dbReference type="GO" id="GO:0046872">
    <property type="term" value="F:metal ion binding"/>
    <property type="evidence" value="ECO:0007669"/>
    <property type="project" value="UniProtKB-KW"/>
</dbReference>
<dbReference type="GO" id="GO:0008564">
    <property type="term" value="F:protein-exporting ATPase activity"/>
    <property type="evidence" value="ECO:0007669"/>
    <property type="project" value="UniProtKB-EC"/>
</dbReference>
<dbReference type="GO" id="GO:0065002">
    <property type="term" value="P:intracellular protein transmembrane transport"/>
    <property type="evidence" value="ECO:0007669"/>
    <property type="project" value="UniProtKB-UniRule"/>
</dbReference>
<dbReference type="GO" id="GO:0017038">
    <property type="term" value="P:protein import"/>
    <property type="evidence" value="ECO:0007669"/>
    <property type="project" value="InterPro"/>
</dbReference>
<dbReference type="GO" id="GO:0006605">
    <property type="term" value="P:protein targeting"/>
    <property type="evidence" value="ECO:0007669"/>
    <property type="project" value="UniProtKB-UniRule"/>
</dbReference>
<dbReference type="GO" id="GO:0043952">
    <property type="term" value="P:protein transport by the Sec complex"/>
    <property type="evidence" value="ECO:0007669"/>
    <property type="project" value="TreeGrafter"/>
</dbReference>
<dbReference type="CDD" id="cd17928">
    <property type="entry name" value="DEXDc_SecA"/>
    <property type="match status" value="1"/>
</dbReference>
<dbReference type="CDD" id="cd18803">
    <property type="entry name" value="SF2_C_secA"/>
    <property type="match status" value="1"/>
</dbReference>
<dbReference type="FunFam" id="1.10.3060.10:FF:000002">
    <property type="entry name" value="Preprotein translocase subunit SecA"/>
    <property type="match status" value="1"/>
</dbReference>
<dbReference type="FunFam" id="3.40.50.300:FF:000694">
    <property type="entry name" value="Preprotein translocase subunit SecA"/>
    <property type="match status" value="1"/>
</dbReference>
<dbReference type="FunFam" id="3.90.1440.10:FF:000001">
    <property type="entry name" value="Preprotein translocase subunit SecA"/>
    <property type="match status" value="1"/>
</dbReference>
<dbReference type="Gene3D" id="1.10.3060.10">
    <property type="entry name" value="Helical scaffold and wing domains of SecA"/>
    <property type="match status" value="1"/>
</dbReference>
<dbReference type="Gene3D" id="3.40.50.300">
    <property type="entry name" value="P-loop containing nucleotide triphosphate hydrolases"/>
    <property type="match status" value="3"/>
</dbReference>
<dbReference type="Gene3D" id="3.90.1440.10">
    <property type="entry name" value="SecA, preprotein cross-linking domain"/>
    <property type="match status" value="1"/>
</dbReference>
<dbReference type="HAMAP" id="MF_01382">
    <property type="entry name" value="SecA"/>
    <property type="match status" value="1"/>
</dbReference>
<dbReference type="InterPro" id="IPR014001">
    <property type="entry name" value="Helicase_ATP-bd"/>
</dbReference>
<dbReference type="InterPro" id="IPR001650">
    <property type="entry name" value="Helicase_C-like"/>
</dbReference>
<dbReference type="InterPro" id="IPR027417">
    <property type="entry name" value="P-loop_NTPase"/>
</dbReference>
<dbReference type="InterPro" id="IPR004027">
    <property type="entry name" value="SEC_C_motif"/>
</dbReference>
<dbReference type="InterPro" id="IPR000185">
    <property type="entry name" value="SecA"/>
</dbReference>
<dbReference type="InterPro" id="IPR020937">
    <property type="entry name" value="SecA_CS"/>
</dbReference>
<dbReference type="InterPro" id="IPR011115">
    <property type="entry name" value="SecA_DEAD"/>
</dbReference>
<dbReference type="InterPro" id="IPR014018">
    <property type="entry name" value="SecA_motor_DEAD"/>
</dbReference>
<dbReference type="InterPro" id="IPR011130">
    <property type="entry name" value="SecA_preprotein_X-link_dom"/>
</dbReference>
<dbReference type="InterPro" id="IPR044722">
    <property type="entry name" value="SecA_SF2_C"/>
</dbReference>
<dbReference type="InterPro" id="IPR011116">
    <property type="entry name" value="SecA_Wing/Scaffold"/>
</dbReference>
<dbReference type="InterPro" id="IPR036266">
    <property type="entry name" value="SecA_Wing/Scaffold_sf"/>
</dbReference>
<dbReference type="InterPro" id="IPR036670">
    <property type="entry name" value="SecA_X-link_sf"/>
</dbReference>
<dbReference type="NCBIfam" id="NF006630">
    <property type="entry name" value="PRK09200.1"/>
    <property type="match status" value="1"/>
</dbReference>
<dbReference type="NCBIfam" id="NF009538">
    <property type="entry name" value="PRK12904.1"/>
    <property type="match status" value="1"/>
</dbReference>
<dbReference type="NCBIfam" id="TIGR00963">
    <property type="entry name" value="secA"/>
    <property type="match status" value="1"/>
</dbReference>
<dbReference type="PANTHER" id="PTHR30612:SF0">
    <property type="entry name" value="CHLOROPLAST PROTEIN-TRANSPORTING ATPASE"/>
    <property type="match status" value="1"/>
</dbReference>
<dbReference type="PANTHER" id="PTHR30612">
    <property type="entry name" value="SECA INNER MEMBRANE COMPONENT OF SEC PROTEIN SECRETION SYSTEM"/>
    <property type="match status" value="1"/>
</dbReference>
<dbReference type="Pfam" id="PF21090">
    <property type="entry name" value="P-loop_SecA"/>
    <property type="match status" value="1"/>
</dbReference>
<dbReference type="Pfam" id="PF02810">
    <property type="entry name" value="SEC-C"/>
    <property type="match status" value="1"/>
</dbReference>
<dbReference type="Pfam" id="PF07517">
    <property type="entry name" value="SecA_DEAD"/>
    <property type="match status" value="1"/>
</dbReference>
<dbReference type="Pfam" id="PF01043">
    <property type="entry name" value="SecA_PP_bind"/>
    <property type="match status" value="1"/>
</dbReference>
<dbReference type="Pfam" id="PF07516">
    <property type="entry name" value="SecA_SW"/>
    <property type="match status" value="1"/>
</dbReference>
<dbReference type="PRINTS" id="PR00906">
    <property type="entry name" value="SECA"/>
</dbReference>
<dbReference type="SMART" id="SM00957">
    <property type="entry name" value="SecA_DEAD"/>
    <property type="match status" value="1"/>
</dbReference>
<dbReference type="SMART" id="SM00958">
    <property type="entry name" value="SecA_PP_bind"/>
    <property type="match status" value="1"/>
</dbReference>
<dbReference type="SUPFAM" id="SSF81886">
    <property type="entry name" value="Helical scaffold and wing domains of SecA"/>
    <property type="match status" value="1"/>
</dbReference>
<dbReference type="SUPFAM" id="SSF52540">
    <property type="entry name" value="P-loop containing nucleoside triphosphate hydrolases"/>
    <property type="match status" value="2"/>
</dbReference>
<dbReference type="SUPFAM" id="SSF81767">
    <property type="entry name" value="Pre-protein crosslinking domain of SecA"/>
    <property type="match status" value="1"/>
</dbReference>
<dbReference type="PROSITE" id="PS01312">
    <property type="entry name" value="SECA"/>
    <property type="match status" value="1"/>
</dbReference>
<dbReference type="PROSITE" id="PS51196">
    <property type="entry name" value="SECA_MOTOR_DEAD"/>
    <property type="match status" value="1"/>
</dbReference>
<proteinExistence type="inferred from homology"/>
<gene>
    <name evidence="1" type="primary">secA1</name>
    <name type="ordered locus">GK3107</name>
</gene>
<evidence type="ECO:0000255" key="1">
    <source>
        <dbReference type="HAMAP-Rule" id="MF_01382"/>
    </source>
</evidence>
<evidence type="ECO:0000256" key="2">
    <source>
        <dbReference type="SAM" id="MobiDB-lite"/>
    </source>
</evidence>
<organism>
    <name type="scientific">Geobacillus kaustophilus (strain HTA426)</name>
    <dbReference type="NCBI Taxonomy" id="235909"/>
    <lineage>
        <taxon>Bacteria</taxon>
        <taxon>Bacillati</taxon>
        <taxon>Bacillota</taxon>
        <taxon>Bacilli</taxon>
        <taxon>Bacillales</taxon>
        <taxon>Anoxybacillaceae</taxon>
        <taxon>Geobacillus</taxon>
        <taxon>Geobacillus thermoleovorans group</taxon>
    </lineage>
</organism>
<feature type="chain" id="PRO_0000318355" description="Protein translocase subunit SecA 1">
    <location>
        <begin position="1"/>
        <end position="837"/>
    </location>
</feature>
<feature type="region of interest" description="Disordered" evidence="2">
    <location>
        <begin position="787"/>
        <end position="811"/>
    </location>
</feature>
<feature type="compositionally biased region" description="Basic and acidic residues" evidence="2">
    <location>
        <begin position="787"/>
        <end position="806"/>
    </location>
</feature>
<feature type="binding site" evidence="1">
    <location>
        <position position="85"/>
    </location>
    <ligand>
        <name>ATP</name>
        <dbReference type="ChEBI" id="CHEBI:30616"/>
    </ligand>
</feature>
<feature type="binding site" evidence="1">
    <location>
        <begin position="103"/>
        <end position="107"/>
    </location>
    <ligand>
        <name>ATP</name>
        <dbReference type="ChEBI" id="CHEBI:30616"/>
    </ligand>
</feature>
<feature type="binding site" evidence="1">
    <location>
        <position position="492"/>
    </location>
    <ligand>
        <name>ATP</name>
        <dbReference type="ChEBI" id="CHEBI:30616"/>
    </ligand>
</feature>
<feature type="binding site" evidence="1">
    <location>
        <position position="821"/>
    </location>
    <ligand>
        <name>Zn(2+)</name>
        <dbReference type="ChEBI" id="CHEBI:29105"/>
    </ligand>
</feature>
<feature type="binding site" evidence="1">
    <location>
        <position position="823"/>
    </location>
    <ligand>
        <name>Zn(2+)</name>
        <dbReference type="ChEBI" id="CHEBI:29105"/>
    </ligand>
</feature>
<feature type="binding site" evidence="1">
    <location>
        <position position="832"/>
    </location>
    <ligand>
        <name>Zn(2+)</name>
        <dbReference type="ChEBI" id="CHEBI:29105"/>
    </ligand>
</feature>
<feature type="binding site" evidence="1">
    <location>
        <position position="833"/>
    </location>
    <ligand>
        <name>Zn(2+)</name>
        <dbReference type="ChEBI" id="CHEBI:29105"/>
    </ligand>
</feature>
<keyword id="KW-0067">ATP-binding</keyword>
<keyword id="KW-1003">Cell membrane</keyword>
<keyword id="KW-0963">Cytoplasm</keyword>
<keyword id="KW-0472">Membrane</keyword>
<keyword id="KW-0479">Metal-binding</keyword>
<keyword id="KW-0547">Nucleotide-binding</keyword>
<keyword id="KW-0653">Protein transport</keyword>
<keyword id="KW-1185">Reference proteome</keyword>
<keyword id="KW-1278">Translocase</keyword>
<keyword id="KW-0811">Translocation</keyword>
<keyword id="KW-0813">Transport</keyword>
<keyword id="KW-0862">Zinc</keyword>